<organism>
    <name type="scientific">Methanothrix thermoacetophila (strain DSM 6194 / JCM 14653 / NBRC 101360 / PT)</name>
    <name type="common">Methanosaeta thermophila</name>
    <dbReference type="NCBI Taxonomy" id="349307"/>
    <lineage>
        <taxon>Archaea</taxon>
        <taxon>Methanobacteriati</taxon>
        <taxon>Methanobacteriota</taxon>
        <taxon>Stenosarchaea group</taxon>
        <taxon>Methanomicrobia</taxon>
        <taxon>Methanotrichales</taxon>
        <taxon>Methanotrichaceae</taxon>
        <taxon>Methanothrix</taxon>
    </lineage>
</organism>
<evidence type="ECO:0000255" key="1">
    <source>
        <dbReference type="HAMAP-Rule" id="MF_00222"/>
    </source>
</evidence>
<dbReference type="EC" id="1.1.1.25" evidence="1"/>
<dbReference type="EMBL" id="CP000477">
    <property type="protein sequence ID" value="ABK15273.1"/>
    <property type="molecule type" value="Genomic_DNA"/>
</dbReference>
<dbReference type="RefSeq" id="WP_011696665.1">
    <property type="nucleotide sequence ID" value="NC_008553.1"/>
</dbReference>
<dbReference type="SMR" id="A0B999"/>
<dbReference type="STRING" id="349307.Mthe_1501"/>
<dbReference type="GeneID" id="4462223"/>
<dbReference type="KEGG" id="mtp:Mthe_1501"/>
<dbReference type="HOGENOM" id="CLU_044063_0_1_2"/>
<dbReference type="OrthoDB" id="8744at2157"/>
<dbReference type="UniPathway" id="UPA00053">
    <property type="reaction ID" value="UER00087"/>
</dbReference>
<dbReference type="Proteomes" id="UP000000674">
    <property type="component" value="Chromosome"/>
</dbReference>
<dbReference type="GO" id="GO:0050661">
    <property type="term" value="F:NADP binding"/>
    <property type="evidence" value="ECO:0007669"/>
    <property type="project" value="InterPro"/>
</dbReference>
<dbReference type="GO" id="GO:0004764">
    <property type="term" value="F:shikimate 3-dehydrogenase (NADP+) activity"/>
    <property type="evidence" value="ECO:0007669"/>
    <property type="project" value="UniProtKB-UniRule"/>
</dbReference>
<dbReference type="GO" id="GO:0008652">
    <property type="term" value="P:amino acid biosynthetic process"/>
    <property type="evidence" value="ECO:0007669"/>
    <property type="project" value="UniProtKB-KW"/>
</dbReference>
<dbReference type="GO" id="GO:0009073">
    <property type="term" value="P:aromatic amino acid family biosynthetic process"/>
    <property type="evidence" value="ECO:0007669"/>
    <property type="project" value="UniProtKB-KW"/>
</dbReference>
<dbReference type="GO" id="GO:0009423">
    <property type="term" value="P:chorismate biosynthetic process"/>
    <property type="evidence" value="ECO:0007669"/>
    <property type="project" value="UniProtKB-UniRule"/>
</dbReference>
<dbReference type="GO" id="GO:0019632">
    <property type="term" value="P:shikimate metabolic process"/>
    <property type="evidence" value="ECO:0007669"/>
    <property type="project" value="InterPro"/>
</dbReference>
<dbReference type="CDD" id="cd01065">
    <property type="entry name" value="NAD_bind_Shikimate_DH"/>
    <property type="match status" value="1"/>
</dbReference>
<dbReference type="Gene3D" id="3.40.50.10860">
    <property type="entry name" value="Leucine Dehydrogenase, chain A, domain 1"/>
    <property type="match status" value="1"/>
</dbReference>
<dbReference type="Gene3D" id="3.40.50.720">
    <property type="entry name" value="NAD(P)-binding Rossmann-like Domain"/>
    <property type="match status" value="1"/>
</dbReference>
<dbReference type="HAMAP" id="MF_00222">
    <property type="entry name" value="Shikimate_DH_AroE"/>
    <property type="match status" value="1"/>
</dbReference>
<dbReference type="InterPro" id="IPR046346">
    <property type="entry name" value="Aminoacid_DH-like_N_sf"/>
</dbReference>
<dbReference type="InterPro" id="IPR036291">
    <property type="entry name" value="NAD(P)-bd_dom_sf"/>
</dbReference>
<dbReference type="InterPro" id="IPR041121">
    <property type="entry name" value="SDH_C"/>
</dbReference>
<dbReference type="InterPro" id="IPR011342">
    <property type="entry name" value="Shikimate_DH"/>
</dbReference>
<dbReference type="InterPro" id="IPR013708">
    <property type="entry name" value="Shikimate_DH-bd_N"/>
</dbReference>
<dbReference type="InterPro" id="IPR022893">
    <property type="entry name" value="Shikimate_DH_fam"/>
</dbReference>
<dbReference type="InterPro" id="IPR006151">
    <property type="entry name" value="Shikm_DH/Glu-tRNA_Rdtase"/>
</dbReference>
<dbReference type="NCBIfam" id="TIGR00507">
    <property type="entry name" value="aroE"/>
    <property type="match status" value="1"/>
</dbReference>
<dbReference type="PANTHER" id="PTHR21089:SF1">
    <property type="entry name" value="BIFUNCTIONAL 3-DEHYDROQUINATE DEHYDRATASE_SHIKIMATE DEHYDROGENASE, CHLOROPLASTIC"/>
    <property type="match status" value="1"/>
</dbReference>
<dbReference type="PANTHER" id="PTHR21089">
    <property type="entry name" value="SHIKIMATE DEHYDROGENASE"/>
    <property type="match status" value="1"/>
</dbReference>
<dbReference type="Pfam" id="PF18317">
    <property type="entry name" value="SDH_C"/>
    <property type="match status" value="1"/>
</dbReference>
<dbReference type="Pfam" id="PF01488">
    <property type="entry name" value="Shikimate_DH"/>
    <property type="match status" value="1"/>
</dbReference>
<dbReference type="Pfam" id="PF08501">
    <property type="entry name" value="Shikimate_dh_N"/>
    <property type="match status" value="1"/>
</dbReference>
<dbReference type="SUPFAM" id="SSF53223">
    <property type="entry name" value="Aminoacid dehydrogenase-like, N-terminal domain"/>
    <property type="match status" value="1"/>
</dbReference>
<dbReference type="SUPFAM" id="SSF51735">
    <property type="entry name" value="NAD(P)-binding Rossmann-fold domains"/>
    <property type="match status" value="1"/>
</dbReference>
<gene>
    <name evidence="1" type="primary">aroE</name>
    <name type="ordered locus">Mthe_1501</name>
</gene>
<name>AROE_METTP</name>
<keyword id="KW-0028">Amino-acid biosynthesis</keyword>
<keyword id="KW-0057">Aromatic amino acid biosynthesis</keyword>
<keyword id="KW-0521">NADP</keyword>
<keyword id="KW-0560">Oxidoreductase</keyword>
<keyword id="KW-1185">Reference proteome</keyword>
<protein>
    <recommendedName>
        <fullName evidence="1">Shikimate dehydrogenase (NADP(+))</fullName>
        <shortName evidence="1">SDH</shortName>
        <ecNumber evidence="1">1.1.1.25</ecNumber>
    </recommendedName>
</protein>
<sequence length="269" mass="28654">MKVYAVLGDPIEHSLSPVMHNAAFQAMGLQASYHAFRVKIPRLRDAILGADAMGFGGLNLTIPLKESAISVVEPDETAEAIGAANTVSFQRGIRGHNTDGIGASLALRHYGVNVRGADVLLIGAGGAARAIAYQLSKDGAEIVVTNRTPERGLALASDLGLEFRPFGEIDDLVRVSDVVINATSVGMRDGDPRLFDGSILKAEQVVFDIIYSRETELLRDARRAGAKAIDGVMMLVYQGAAAFRIWTGLDEPVDVMEAAVRAALGRLNL</sequence>
<reference key="1">
    <citation type="submission" date="2006-10" db="EMBL/GenBank/DDBJ databases">
        <title>Complete sequence of Methanosaeta thermophila PT.</title>
        <authorList>
            <consortium name="US DOE Joint Genome Institute"/>
            <person name="Copeland A."/>
            <person name="Lucas S."/>
            <person name="Lapidus A."/>
            <person name="Barry K."/>
            <person name="Detter J.C."/>
            <person name="Glavina del Rio T."/>
            <person name="Hammon N."/>
            <person name="Israni S."/>
            <person name="Pitluck S."/>
            <person name="Chain P."/>
            <person name="Malfatti S."/>
            <person name="Shin M."/>
            <person name="Vergez L."/>
            <person name="Schmutz J."/>
            <person name="Larimer F."/>
            <person name="Land M."/>
            <person name="Hauser L."/>
            <person name="Kyrpides N."/>
            <person name="Kim E."/>
            <person name="Smith K.S."/>
            <person name="Ingram-Smith C."/>
            <person name="Richardson P."/>
        </authorList>
    </citation>
    <scope>NUCLEOTIDE SEQUENCE [LARGE SCALE GENOMIC DNA]</scope>
    <source>
        <strain>DSM 6194 / JCM 14653 / NBRC 101360 / PT</strain>
    </source>
</reference>
<feature type="chain" id="PRO_1000021308" description="Shikimate dehydrogenase (NADP(+))">
    <location>
        <begin position="1"/>
        <end position="269"/>
    </location>
</feature>
<feature type="active site" description="Proton acceptor" evidence="1">
    <location>
        <position position="65"/>
    </location>
</feature>
<feature type="binding site" evidence="1">
    <location>
        <begin position="14"/>
        <end position="16"/>
    </location>
    <ligand>
        <name>shikimate</name>
        <dbReference type="ChEBI" id="CHEBI:36208"/>
    </ligand>
</feature>
<feature type="binding site" evidence="1">
    <location>
        <position position="61"/>
    </location>
    <ligand>
        <name>shikimate</name>
        <dbReference type="ChEBI" id="CHEBI:36208"/>
    </ligand>
</feature>
<feature type="binding site" evidence="1">
    <location>
        <position position="76"/>
    </location>
    <ligand>
        <name>NADP(+)</name>
        <dbReference type="ChEBI" id="CHEBI:58349"/>
    </ligand>
</feature>
<feature type="binding site" evidence="1">
    <location>
        <position position="85"/>
    </location>
    <ligand>
        <name>shikimate</name>
        <dbReference type="ChEBI" id="CHEBI:36208"/>
    </ligand>
</feature>
<feature type="binding site" evidence="1">
    <location>
        <position position="99"/>
    </location>
    <ligand>
        <name>shikimate</name>
        <dbReference type="ChEBI" id="CHEBI:36208"/>
    </ligand>
</feature>
<feature type="binding site" evidence="1">
    <location>
        <begin position="123"/>
        <end position="127"/>
    </location>
    <ligand>
        <name>NADP(+)</name>
        <dbReference type="ChEBI" id="CHEBI:58349"/>
    </ligand>
</feature>
<feature type="binding site" evidence="1">
    <location>
        <begin position="146"/>
        <end position="151"/>
    </location>
    <ligand>
        <name>NADP(+)</name>
        <dbReference type="ChEBI" id="CHEBI:58349"/>
    </ligand>
</feature>
<feature type="binding site" evidence="1">
    <location>
        <position position="209"/>
    </location>
    <ligand>
        <name>NADP(+)</name>
        <dbReference type="ChEBI" id="CHEBI:58349"/>
    </ligand>
</feature>
<feature type="binding site" evidence="1">
    <location>
        <position position="211"/>
    </location>
    <ligand>
        <name>shikimate</name>
        <dbReference type="ChEBI" id="CHEBI:36208"/>
    </ligand>
</feature>
<feature type="binding site" evidence="1">
    <location>
        <position position="231"/>
    </location>
    <ligand>
        <name>NADP(+)</name>
        <dbReference type="ChEBI" id="CHEBI:58349"/>
    </ligand>
</feature>
<accession>A0B999</accession>
<comment type="function">
    <text evidence="1">Involved in the biosynthesis of the chorismate, which leads to the biosynthesis of aromatic amino acids. Catalyzes the reversible NADPH linked reduction of 3-dehydroshikimate (DHSA) to yield shikimate (SA).</text>
</comment>
<comment type="catalytic activity">
    <reaction evidence="1">
        <text>shikimate + NADP(+) = 3-dehydroshikimate + NADPH + H(+)</text>
        <dbReference type="Rhea" id="RHEA:17737"/>
        <dbReference type="ChEBI" id="CHEBI:15378"/>
        <dbReference type="ChEBI" id="CHEBI:16630"/>
        <dbReference type="ChEBI" id="CHEBI:36208"/>
        <dbReference type="ChEBI" id="CHEBI:57783"/>
        <dbReference type="ChEBI" id="CHEBI:58349"/>
        <dbReference type="EC" id="1.1.1.25"/>
    </reaction>
</comment>
<comment type="pathway">
    <text evidence="1">Metabolic intermediate biosynthesis; chorismate biosynthesis; chorismate from D-erythrose 4-phosphate and phosphoenolpyruvate: step 4/7.</text>
</comment>
<comment type="subunit">
    <text evidence="1">Homodimer.</text>
</comment>
<comment type="similarity">
    <text evidence="1">Belongs to the shikimate dehydrogenase family.</text>
</comment>
<proteinExistence type="inferred from homology"/>